<organism>
    <name type="scientific">Escherichia coli (strain UTI89 / UPEC)</name>
    <dbReference type="NCBI Taxonomy" id="364106"/>
    <lineage>
        <taxon>Bacteria</taxon>
        <taxon>Pseudomonadati</taxon>
        <taxon>Pseudomonadota</taxon>
        <taxon>Gammaproteobacteria</taxon>
        <taxon>Enterobacterales</taxon>
        <taxon>Enterobacteriaceae</taxon>
        <taxon>Escherichia</taxon>
    </lineage>
</organism>
<dbReference type="EC" id="2.8.4.4" evidence="1"/>
<dbReference type="EMBL" id="CP000243">
    <property type="protein sequence ID" value="ABE06324.1"/>
    <property type="molecule type" value="Genomic_DNA"/>
</dbReference>
<dbReference type="RefSeq" id="WP_000049378.1">
    <property type="nucleotide sequence ID" value="NZ_CP064825.1"/>
</dbReference>
<dbReference type="SMR" id="Q1RE90"/>
<dbReference type="KEGG" id="eci:UTI89_C0838"/>
<dbReference type="HOGENOM" id="CLU_018697_0_0_6"/>
<dbReference type="Proteomes" id="UP000001952">
    <property type="component" value="Chromosome"/>
</dbReference>
<dbReference type="GO" id="GO:0005829">
    <property type="term" value="C:cytosol"/>
    <property type="evidence" value="ECO:0007669"/>
    <property type="project" value="TreeGrafter"/>
</dbReference>
<dbReference type="GO" id="GO:0051539">
    <property type="term" value="F:4 iron, 4 sulfur cluster binding"/>
    <property type="evidence" value="ECO:0007669"/>
    <property type="project" value="UniProtKB-UniRule"/>
</dbReference>
<dbReference type="GO" id="GO:0035599">
    <property type="term" value="F:aspartic acid methylthiotransferase activity"/>
    <property type="evidence" value="ECO:0007669"/>
    <property type="project" value="TreeGrafter"/>
</dbReference>
<dbReference type="GO" id="GO:0046872">
    <property type="term" value="F:metal ion binding"/>
    <property type="evidence" value="ECO:0007669"/>
    <property type="project" value="UniProtKB-KW"/>
</dbReference>
<dbReference type="GO" id="GO:0103039">
    <property type="term" value="F:protein methylthiotransferase activity"/>
    <property type="evidence" value="ECO:0007669"/>
    <property type="project" value="UniProtKB-EC"/>
</dbReference>
<dbReference type="GO" id="GO:0006400">
    <property type="term" value="P:tRNA modification"/>
    <property type="evidence" value="ECO:0007669"/>
    <property type="project" value="InterPro"/>
</dbReference>
<dbReference type="CDD" id="cd01335">
    <property type="entry name" value="Radical_SAM"/>
    <property type="match status" value="1"/>
</dbReference>
<dbReference type="FunFam" id="2.40.50.140:FF:000060">
    <property type="entry name" value="Ribosomal protein S12 methylthiotransferase RimO"/>
    <property type="match status" value="1"/>
</dbReference>
<dbReference type="FunFam" id="3.40.50.12160:FF:000002">
    <property type="entry name" value="Ribosomal protein S12 methylthiotransferase RimO"/>
    <property type="match status" value="1"/>
</dbReference>
<dbReference type="FunFam" id="3.80.30.20:FF:000001">
    <property type="entry name" value="tRNA-2-methylthio-N(6)-dimethylallyladenosine synthase 2"/>
    <property type="match status" value="1"/>
</dbReference>
<dbReference type="Gene3D" id="3.40.50.12160">
    <property type="entry name" value="Methylthiotransferase, N-terminal domain"/>
    <property type="match status" value="1"/>
</dbReference>
<dbReference type="Gene3D" id="2.40.50.140">
    <property type="entry name" value="Nucleic acid-binding proteins"/>
    <property type="match status" value="1"/>
</dbReference>
<dbReference type="Gene3D" id="3.80.30.20">
    <property type="entry name" value="tm_1862 like domain"/>
    <property type="match status" value="1"/>
</dbReference>
<dbReference type="HAMAP" id="MF_01865">
    <property type="entry name" value="MTTase_RimO"/>
    <property type="match status" value="1"/>
</dbReference>
<dbReference type="InterPro" id="IPR006638">
    <property type="entry name" value="Elp3/MiaA/NifB-like_rSAM"/>
</dbReference>
<dbReference type="InterPro" id="IPR005839">
    <property type="entry name" value="Methylthiotransferase"/>
</dbReference>
<dbReference type="InterPro" id="IPR020612">
    <property type="entry name" value="Methylthiotransferase_CS"/>
</dbReference>
<dbReference type="InterPro" id="IPR013848">
    <property type="entry name" value="Methylthiotransferase_N"/>
</dbReference>
<dbReference type="InterPro" id="IPR038135">
    <property type="entry name" value="Methylthiotransferase_N_sf"/>
</dbReference>
<dbReference type="InterPro" id="IPR012340">
    <property type="entry name" value="NA-bd_OB-fold"/>
</dbReference>
<dbReference type="InterPro" id="IPR005840">
    <property type="entry name" value="Ribosomal_uS12_MeSTrfase_RimO"/>
</dbReference>
<dbReference type="InterPro" id="IPR007197">
    <property type="entry name" value="rSAM"/>
</dbReference>
<dbReference type="InterPro" id="IPR023404">
    <property type="entry name" value="rSAM_horseshoe"/>
</dbReference>
<dbReference type="InterPro" id="IPR002792">
    <property type="entry name" value="TRAM_dom"/>
</dbReference>
<dbReference type="NCBIfam" id="TIGR01125">
    <property type="entry name" value="30S ribosomal protein S12 methylthiotransferase RimO"/>
    <property type="match status" value="1"/>
</dbReference>
<dbReference type="NCBIfam" id="TIGR00089">
    <property type="entry name" value="MiaB/RimO family radical SAM methylthiotransferase"/>
    <property type="match status" value="1"/>
</dbReference>
<dbReference type="PANTHER" id="PTHR43837">
    <property type="entry name" value="RIBOSOMAL PROTEIN S12 METHYLTHIOTRANSFERASE RIMO"/>
    <property type="match status" value="1"/>
</dbReference>
<dbReference type="PANTHER" id="PTHR43837:SF1">
    <property type="entry name" value="RIBOSOMAL PROTEIN US12 METHYLTHIOTRANSFERASE RIMO"/>
    <property type="match status" value="1"/>
</dbReference>
<dbReference type="Pfam" id="PF04055">
    <property type="entry name" value="Radical_SAM"/>
    <property type="match status" value="1"/>
</dbReference>
<dbReference type="Pfam" id="PF18693">
    <property type="entry name" value="TRAM_2"/>
    <property type="match status" value="1"/>
</dbReference>
<dbReference type="Pfam" id="PF00919">
    <property type="entry name" value="UPF0004"/>
    <property type="match status" value="1"/>
</dbReference>
<dbReference type="SFLD" id="SFLDG01082">
    <property type="entry name" value="B12-binding_domain_containing"/>
    <property type="match status" value="1"/>
</dbReference>
<dbReference type="SFLD" id="SFLDS00029">
    <property type="entry name" value="Radical_SAM"/>
    <property type="match status" value="1"/>
</dbReference>
<dbReference type="SFLD" id="SFLDF00274">
    <property type="entry name" value="ribosomal_protein_S12_methylth"/>
    <property type="match status" value="1"/>
</dbReference>
<dbReference type="SMART" id="SM00729">
    <property type="entry name" value="Elp3"/>
    <property type="match status" value="1"/>
</dbReference>
<dbReference type="SUPFAM" id="SSF102114">
    <property type="entry name" value="Radical SAM enzymes"/>
    <property type="match status" value="1"/>
</dbReference>
<dbReference type="PROSITE" id="PS51449">
    <property type="entry name" value="MTTASE_N"/>
    <property type="match status" value="1"/>
</dbReference>
<dbReference type="PROSITE" id="PS01278">
    <property type="entry name" value="MTTASE_RADICAL"/>
    <property type="match status" value="1"/>
</dbReference>
<dbReference type="PROSITE" id="PS51918">
    <property type="entry name" value="RADICAL_SAM"/>
    <property type="match status" value="1"/>
</dbReference>
<dbReference type="PROSITE" id="PS50926">
    <property type="entry name" value="TRAM"/>
    <property type="match status" value="1"/>
</dbReference>
<proteinExistence type="inferred from homology"/>
<protein>
    <recommendedName>
        <fullName evidence="1">Ribosomal protein uS12 methylthiotransferase RimO</fullName>
        <shortName evidence="1">uS12 MTTase</shortName>
        <shortName evidence="1">uS12 methylthiotransferase</shortName>
        <ecNumber evidence="1">2.8.4.4</ecNumber>
    </recommendedName>
    <alternativeName>
        <fullName evidence="1">Ribosomal protein uS12 (aspartate-C(3))-methylthiotransferase</fullName>
    </alternativeName>
    <alternativeName>
        <fullName evidence="1">Ribosome maturation factor RimO</fullName>
    </alternativeName>
</protein>
<gene>
    <name evidence="1" type="primary">rimO</name>
    <name type="ordered locus">UTI89_C0838</name>
</gene>
<name>RIMO_ECOUT</name>
<reference key="1">
    <citation type="journal article" date="2006" name="Proc. Natl. Acad. Sci. U.S.A.">
        <title>Identification of genes subject to positive selection in uropathogenic strains of Escherichia coli: a comparative genomics approach.</title>
        <authorList>
            <person name="Chen S.L."/>
            <person name="Hung C.-S."/>
            <person name="Xu J."/>
            <person name="Reigstad C.S."/>
            <person name="Magrini V."/>
            <person name="Sabo A."/>
            <person name="Blasiar D."/>
            <person name="Bieri T."/>
            <person name="Meyer R.R."/>
            <person name="Ozersky P."/>
            <person name="Armstrong J.R."/>
            <person name="Fulton R.S."/>
            <person name="Latreille J.P."/>
            <person name="Spieth J."/>
            <person name="Hooton T.M."/>
            <person name="Mardis E.R."/>
            <person name="Hultgren S.J."/>
            <person name="Gordon J.I."/>
        </authorList>
    </citation>
    <scope>NUCLEOTIDE SEQUENCE [LARGE SCALE GENOMIC DNA]</scope>
    <source>
        <strain>UTI89 / UPEC</strain>
    </source>
</reference>
<comment type="function">
    <text evidence="1">Catalyzes the methylthiolation of an aspartic acid residue of ribosomal protein uS12.</text>
</comment>
<comment type="catalytic activity">
    <reaction evidence="1">
        <text>L-aspartate(89)-[ribosomal protein uS12]-hydrogen + (sulfur carrier)-SH + AH2 + 2 S-adenosyl-L-methionine = 3-methylsulfanyl-L-aspartate(89)-[ribosomal protein uS12]-hydrogen + (sulfur carrier)-H + 5'-deoxyadenosine + L-methionine + A + S-adenosyl-L-homocysteine + 2 H(+)</text>
        <dbReference type="Rhea" id="RHEA:37087"/>
        <dbReference type="Rhea" id="RHEA-COMP:10460"/>
        <dbReference type="Rhea" id="RHEA-COMP:10461"/>
        <dbReference type="Rhea" id="RHEA-COMP:14737"/>
        <dbReference type="Rhea" id="RHEA-COMP:14739"/>
        <dbReference type="ChEBI" id="CHEBI:13193"/>
        <dbReference type="ChEBI" id="CHEBI:15378"/>
        <dbReference type="ChEBI" id="CHEBI:17319"/>
        <dbReference type="ChEBI" id="CHEBI:17499"/>
        <dbReference type="ChEBI" id="CHEBI:29917"/>
        <dbReference type="ChEBI" id="CHEBI:29961"/>
        <dbReference type="ChEBI" id="CHEBI:57844"/>
        <dbReference type="ChEBI" id="CHEBI:57856"/>
        <dbReference type="ChEBI" id="CHEBI:59789"/>
        <dbReference type="ChEBI" id="CHEBI:64428"/>
        <dbReference type="ChEBI" id="CHEBI:73599"/>
        <dbReference type="EC" id="2.8.4.4"/>
    </reaction>
</comment>
<comment type="cofactor">
    <cofactor evidence="1">
        <name>[4Fe-4S] cluster</name>
        <dbReference type="ChEBI" id="CHEBI:49883"/>
    </cofactor>
    <text evidence="1">Binds 2 [4Fe-4S] clusters. One cluster is coordinated with 3 cysteines and an exchangeable S-adenosyl-L-methionine.</text>
</comment>
<comment type="subcellular location">
    <subcellularLocation>
        <location evidence="1">Cytoplasm</location>
    </subcellularLocation>
</comment>
<comment type="similarity">
    <text evidence="1">Belongs to the methylthiotransferase family. RimO subfamily.</text>
</comment>
<keyword id="KW-0004">4Fe-4S</keyword>
<keyword id="KW-0963">Cytoplasm</keyword>
<keyword id="KW-0408">Iron</keyword>
<keyword id="KW-0411">Iron-sulfur</keyword>
<keyword id="KW-0479">Metal-binding</keyword>
<keyword id="KW-0949">S-adenosyl-L-methionine</keyword>
<keyword id="KW-0808">Transferase</keyword>
<sequence>MSKVTPQPKIGFVSLGCPKNLVDSERILTELRTEGYDVVPSYDDADMVIVNTCGFIDSAVQESLEAIGEALNENGKVIVTGCLGAKEDQIREVHPKVLEITGPHSYEQVLEHVHHYVPKPKHNPFLSLVPEQGVKLTPRHYAYLKISEGCNHRCTFCIIPSMRGDLVSRPIGEVLSEAKRLVDAGVKEILVISQDTSAYGVDVKHRTGFHNGEPVKTSMVSLCEQLSKLGIWTRLHYVYPYPHVDDVIPLMAEGKILPYLDIPLQHASPRILKLMKRPGSVDRQLARIKQWRKICPELTLRSTFIVGFPGETEEDFQMLLDFLKEARLDRVGCFKYSPVEGADANALPDQVPEEVKEERWNRFMQLQQQISAERLQEKVGREILVIIDEVDEEGAIGRSMADAPEIDGAVYLNGETNVKPGDILRVKVEHADEYDLWGSRV</sequence>
<feature type="chain" id="PRO_0000374821" description="Ribosomal protein uS12 methylthiotransferase RimO">
    <location>
        <begin position="1"/>
        <end position="441"/>
    </location>
</feature>
<feature type="domain" description="MTTase N-terminal" evidence="1">
    <location>
        <begin position="8"/>
        <end position="118"/>
    </location>
</feature>
<feature type="domain" description="Radical SAM core" evidence="2">
    <location>
        <begin position="136"/>
        <end position="373"/>
    </location>
</feature>
<feature type="domain" description="TRAM" evidence="1">
    <location>
        <begin position="376"/>
        <end position="441"/>
    </location>
</feature>
<feature type="binding site" evidence="1">
    <location>
        <position position="17"/>
    </location>
    <ligand>
        <name>[4Fe-4S] cluster</name>
        <dbReference type="ChEBI" id="CHEBI:49883"/>
        <label>1</label>
    </ligand>
</feature>
<feature type="binding site" evidence="1">
    <location>
        <position position="53"/>
    </location>
    <ligand>
        <name>[4Fe-4S] cluster</name>
        <dbReference type="ChEBI" id="CHEBI:49883"/>
        <label>1</label>
    </ligand>
</feature>
<feature type="binding site" evidence="1">
    <location>
        <position position="82"/>
    </location>
    <ligand>
        <name>[4Fe-4S] cluster</name>
        <dbReference type="ChEBI" id="CHEBI:49883"/>
        <label>1</label>
    </ligand>
</feature>
<feature type="binding site" evidence="1">
    <location>
        <position position="150"/>
    </location>
    <ligand>
        <name>[4Fe-4S] cluster</name>
        <dbReference type="ChEBI" id="CHEBI:49883"/>
        <label>2</label>
        <note>4Fe-4S-S-AdoMet</note>
    </ligand>
</feature>
<feature type="binding site" evidence="1">
    <location>
        <position position="154"/>
    </location>
    <ligand>
        <name>[4Fe-4S] cluster</name>
        <dbReference type="ChEBI" id="CHEBI:49883"/>
        <label>2</label>
        <note>4Fe-4S-S-AdoMet</note>
    </ligand>
</feature>
<feature type="binding site" evidence="1">
    <location>
        <position position="157"/>
    </location>
    <ligand>
        <name>[4Fe-4S] cluster</name>
        <dbReference type="ChEBI" id="CHEBI:49883"/>
        <label>2</label>
        <note>4Fe-4S-S-AdoMet</note>
    </ligand>
</feature>
<accession>Q1RE90</accession>
<evidence type="ECO:0000255" key="1">
    <source>
        <dbReference type="HAMAP-Rule" id="MF_01865"/>
    </source>
</evidence>
<evidence type="ECO:0000255" key="2">
    <source>
        <dbReference type="PROSITE-ProRule" id="PRU01266"/>
    </source>
</evidence>